<name>PNP_ARTS2</name>
<organism>
    <name type="scientific">Arthrobacter sp. (strain FB24)</name>
    <dbReference type="NCBI Taxonomy" id="290399"/>
    <lineage>
        <taxon>Bacteria</taxon>
        <taxon>Bacillati</taxon>
        <taxon>Actinomycetota</taxon>
        <taxon>Actinomycetes</taxon>
        <taxon>Micrococcales</taxon>
        <taxon>Micrococcaceae</taxon>
        <taxon>Arthrobacter</taxon>
    </lineage>
</organism>
<evidence type="ECO:0000255" key="1">
    <source>
        <dbReference type="HAMAP-Rule" id="MF_01595"/>
    </source>
</evidence>
<proteinExistence type="inferred from homology"/>
<protein>
    <recommendedName>
        <fullName evidence="1">Polyribonucleotide nucleotidyltransferase</fullName>
        <ecNumber evidence="1">2.7.7.8</ecNumber>
    </recommendedName>
    <alternativeName>
        <fullName evidence="1">Polynucleotide phosphorylase</fullName>
        <shortName evidence="1">PNPase</shortName>
    </alternativeName>
</protein>
<sequence>MEGPEIQFSEAVIDNGRFGKRVIRFETGRLAKQAAGAAMVYIDEDTALLSATTAGKHPREGFDFFPLTVDVEERMYAAGRIPGSFFRREGRPSTEAILACRLMDRPLRPAFIKGLRNEVQIVVTVLAINPDELYDVVAINASSMSTQLSGLPFSGPIGGVRVALVADEHGSQWVAFPKHSQLENSVFNMVVAGRVAGDDVAIMMVEAEATDNSWNLIKEQGATAPTEEVVSEGLEAAKPFIKALCDAQADLAARAAKPTVEFPVFLDYEDDAYAAVEAAAAEKLAAVFQIADKQERDAASDQLKDDVTSSLAGQFEGREKELSAAFRSVTKHVVRQRILKDQIRIDGRGLTDIRQLTAEVEVLPRVHGSAIFERGETQIMGVTTLNMLKMEQQIDSLSPVTRKRYMHNYNFPPYSTGETGRVGSPKRREIGHGALAERALVPVLPSREEFPYAIRQVSEALSSNGSTSMGSVCASTLSMLNAGVPLKAAVAGIAMGLVSDQVDGQTRYAALTDILGAEDAFGDMDFKVAGTSEFVTAIQLDTKLDGIPASVLAAALKQAREARLHILEVINSAIDTPDELSEFAPRVIAVKIPVDKIGEVIGPKGKMINQIQEDTGADISIEDDGTVYIGATNGPSADAARSAINAIANPQVPEIGERYLGTVVKTTTFGAFISLTPGKDGLLHISELRKIAGGKRVDNVEDVVSVGQKIQVEITKIDDRGKLSLSPVIAEEEGAENAEVAEAAAE</sequence>
<feature type="chain" id="PRO_0000329505" description="Polyribonucleotide nucleotidyltransferase">
    <location>
        <begin position="1"/>
        <end position="746"/>
    </location>
</feature>
<feature type="domain" description="KH" evidence="1">
    <location>
        <begin position="585"/>
        <end position="644"/>
    </location>
</feature>
<feature type="domain" description="S1 motif" evidence="1">
    <location>
        <begin position="656"/>
        <end position="728"/>
    </location>
</feature>
<feature type="binding site" evidence="1">
    <location>
        <position position="519"/>
    </location>
    <ligand>
        <name>Mg(2+)</name>
        <dbReference type="ChEBI" id="CHEBI:18420"/>
    </ligand>
</feature>
<feature type="binding site" evidence="1">
    <location>
        <position position="525"/>
    </location>
    <ligand>
        <name>Mg(2+)</name>
        <dbReference type="ChEBI" id="CHEBI:18420"/>
    </ligand>
</feature>
<accession>A0JUV8</accession>
<keyword id="KW-0963">Cytoplasm</keyword>
<keyword id="KW-0460">Magnesium</keyword>
<keyword id="KW-0479">Metal-binding</keyword>
<keyword id="KW-0548">Nucleotidyltransferase</keyword>
<keyword id="KW-1185">Reference proteome</keyword>
<keyword id="KW-0694">RNA-binding</keyword>
<keyword id="KW-0808">Transferase</keyword>
<comment type="function">
    <text evidence="1">Involved in mRNA degradation. Catalyzes the phosphorolysis of single-stranded polyribonucleotides processively in the 3'- to 5'-direction.</text>
</comment>
<comment type="catalytic activity">
    <reaction evidence="1">
        <text>RNA(n+1) + phosphate = RNA(n) + a ribonucleoside 5'-diphosphate</text>
        <dbReference type="Rhea" id="RHEA:22096"/>
        <dbReference type="Rhea" id="RHEA-COMP:14527"/>
        <dbReference type="Rhea" id="RHEA-COMP:17342"/>
        <dbReference type="ChEBI" id="CHEBI:43474"/>
        <dbReference type="ChEBI" id="CHEBI:57930"/>
        <dbReference type="ChEBI" id="CHEBI:140395"/>
        <dbReference type="EC" id="2.7.7.8"/>
    </reaction>
</comment>
<comment type="cofactor">
    <cofactor evidence="1">
        <name>Mg(2+)</name>
        <dbReference type="ChEBI" id="CHEBI:18420"/>
    </cofactor>
</comment>
<comment type="subcellular location">
    <subcellularLocation>
        <location evidence="1">Cytoplasm</location>
    </subcellularLocation>
</comment>
<comment type="similarity">
    <text evidence="1">Belongs to the polyribonucleotide nucleotidyltransferase family.</text>
</comment>
<gene>
    <name evidence="1" type="primary">pnp</name>
    <name type="ordered locus">Arth_1434</name>
</gene>
<reference key="1">
    <citation type="journal article" date="2013" name="Stand. Genomic Sci.">
        <title>Complete genome sequence of Arthrobacter sp. strain FB24.</title>
        <authorList>
            <person name="Nakatsu C.H."/>
            <person name="Barabote R."/>
            <person name="Thompson S."/>
            <person name="Bruce D."/>
            <person name="Detter C."/>
            <person name="Brettin T."/>
            <person name="Han C."/>
            <person name="Beasley F."/>
            <person name="Chen W."/>
            <person name="Konopka A."/>
            <person name="Xie G."/>
        </authorList>
    </citation>
    <scope>NUCLEOTIDE SEQUENCE [LARGE SCALE GENOMIC DNA]</scope>
    <source>
        <strain>FB24</strain>
    </source>
</reference>
<dbReference type="EC" id="2.7.7.8" evidence="1"/>
<dbReference type="EMBL" id="CP000454">
    <property type="protein sequence ID" value="ABK02828.1"/>
    <property type="molecule type" value="Genomic_DNA"/>
</dbReference>
<dbReference type="RefSeq" id="WP_011691295.1">
    <property type="nucleotide sequence ID" value="NC_008541.1"/>
</dbReference>
<dbReference type="SMR" id="A0JUV8"/>
<dbReference type="STRING" id="290399.Arth_1434"/>
<dbReference type="KEGG" id="art:Arth_1434"/>
<dbReference type="eggNOG" id="COG1185">
    <property type="taxonomic scope" value="Bacteria"/>
</dbReference>
<dbReference type="HOGENOM" id="CLU_004217_2_2_11"/>
<dbReference type="OrthoDB" id="9804305at2"/>
<dbReference type="Proteomes" id="UP000000754">
    <property type="component" value="Chromosome"/>
</dbReference>
<dbReference type="GO" id="GO:0005829">
    <property type="term" value="C:cytosol"/>
    <property type="evidence" value="ECO:0007669"/>
    <property type="project" value="TreeGrafter"/>
</dbReference>
<dbReference type="GO" id="GO:0000175">
    <property type="term" value="F:3'-5'-RNA exonuclease activity"/>
    <property type="evidence" value="ECO:0007669"/>
    <property type="project" value="TreeGrafter"/>
</dbReference>
<dbReference type="GO" id="GO:0000287">
    <property type="term" value="F:magnesium ion binding"/>
    <property type="evidence" value="ECO:0007669"/>
    <property type="project" value="UniProtKB-UniRule"/>
</dbReference>
<dbReference type="GO" id="GO:0004654">
    <property type="term" value="F:polyribonucleotide nucleotidyltransferase activity"/>
    <property type="evidence" value="ECO:0007669"/>
    <property type="project" value="UniProtKB-UniRule"/>
</dbReference>
<dbReference type="GO" id="GO:0003723">
    <property type="term" value="F:RNA binding"/>
    <property type="evidence" value="ECO:0007669"/>
    <property type="project" value="UniProtKB-UniRule"/>
</dbReference>
<dbReference type="GO" id="GO:0006402">
    <property type="term" value="P:mRNA catabolic process"/>
    <property type="evidence" value="ECO:0007669"/>
    <property type="project" value="UniProtKB-UniRule"/>
</dbReference>
<dbReference type="GO" id="GO:0006396">
    <property type="term" value="P:RNA processing"/>
    <property type="evidence" value="ECO:0007669"/>
    <property type="project" value="InterPro"/>
</dbReference>
<dbReference type="CDD" id="cd02393">
    <property type="entry name" value="KH-I_PNPase"/>
    <property type="match status" value="1"/>
</dbReference>
<dbReference type="CDD" id="cd11364">
    <property type="entry name" value="RNase_PH_PNPase_2"/>
    <property type="match status" value="1"/>
</dbReference>
<dbReference type="CDD" id="cd04472">
    <property type="entry name" value="S1_PNPase"/>
    <property type="match status" value="1"/>
</dbReference>
<dbReference type="FunFam" id="2.40.50.140:FF:000069">
    <property type="entry name" value="Polyribonucleotide nucleotidyltransferase"/>
    <property type="match status" value="1"/>
</dbReference>
<dbReference type="FunFam" id="3.30.1370.10:FF:000001">
    <property type="entry name" value="Polyribonucleotide nucleotidyltransferase"/>
    <property type="match status" value="1"/>
</dbReference>
<dbReference type="FunFam" id="3.30.230.70:FF:000001">
    <property type="entry name" value="Polyribonucleotide nucleotidyltransferase"/>
    <property type="match status" value="1"/>
</dbReference>
<dbReference type="FunFam" id="3.30.230.70:FF:000002">
    <property type="entry name" value="Polyribonucleotide nucleotidyltransferase"/>
    <property type="match status" value="1"/>
</dbReference>
<dbReference type="Gene3D" id="3.30.230.70">
    <property type="entry name" value="GHMP Kinase, N-terminal domain"/>
    <property type="match status" value="2"/>
</dbReference>
<dbReference type="Gene3D" id="3.30.1370.10">
    <property type="entry name" value="K Homology domain, type 1"/>
    <property type="match status" value="1"/>
</dbReference>
<dbReference type="Gene3D" id="2.40.50.140">
    <property type="entry name" value="Nucleic acid-binding proteins"/>
    <property type="match status" value="1"/>
</dbReference>
<dbReference type="HAMAP" id="MF_01595">
    <property type="entry name" value="PNPase"/>
    <property type="match status" value="1"/>
</dbReference>
<dbReference type="InterPro" id="IPR001247">
    <property type="entry name" value="ExoRNase_PH_dom1"/>
</dbReference>
<dbReference type="InterPro" id="IPR036345">
    <property type="entry name" value="ExoRNase_PH_dom2_sf"/>
</dbReference>
<dbReference type="InterPro" id="IPR014069">
    <property type="entry name" value="GPSI/PNP"/>
</dbReference>
<dbReference type="InterPro" id="IPR004087">
    <property type="entry name" value="KH_dom"/>
</dbReference>
<dbReference type="InterPro" id="IPR004088">
    <property type="entry name" value="KH_dom_type_1"/>
</dbReference>
<dbReference type="InterPro" id="IPR036612">
    <property type="entry name" value="KH_dom_type_1_sf"/>
</dbReference>
<dbReference type="InterPro" id="IPR012340">
    <property type="entry name" value="NA-bd_OB-fold"/>
</dbReference>
<dbReference type="InterPro" id="IPR012162">
    <property type="entry name" value="PNPase"/>
</dbReference>
<dbReference type="InterPro" id="IPR027408">
    <property type="entry name" value="PNPase/RNase_PH_dom_sf"/>
</dbReference>
<dbReference type="InterPro" id="IPR015848">
    <property type="entry name" value="PNPase_PH_RNA-bd_bac/org-type"/>
</dbReference>
<dbReference type="InterPro" id="IPR036456">
    <property type="entry name" value="PNPase_PH_RNA-bd_sf"/>
</dbReference>
<dbReference type="InterPro" id="IPR020568">
    <property type="entry name" value="Ribosomal_Su5_D2-typ_SF"/>
</dbReference>
<dbReference type="InterPro" id="IPR003029">
    <property type="entry name" value="S1_domain"/>
</dbReference>
<dbReference type="NCBIfam" id="TIGR03591">
    <property type="entry name" value="polynuc_phos"/>
    <property type="match status" value="1"/>
</dbReference>
<dbReference type="NCBIfam" id="TIGR02696">
    <property type="entry name" value="pppGpp_PNP"/>
    <property type="match status" value="1"/>
</dbReference>
<dbReference type="NCBIfam" id="NF008805">
    <property type="entry name" value="PRK11824.1"/>
    <property type="match status" value="1"/>
</dbReference>
<dbReference type="PANTHER" id="PTHR11252">
    <property type="entry name" value="POLYRIBONUCLEOTIDE NUCLEOTIDYLTRANSFERASE"/>
    <property type="match status" value="1"/>
</dbReference>
<dbReference type="PANTHER" id="PTHR11252:SF0">
    <property type="entry name" value="POLYRIBONUCLEOTIDE NUCLEOTIDYLTRANSFERASE 1, MITOCHONDRIAL"/>
    <property type="match status" value="1"/>
</dbReference>
<dbReference type="Pfam" id="PF00013">
    <property type="entry name" value="KH_1"/>
    <property type="match status" value="1"/>
</dbReference>
<dbReference type="Pfam" id="PF03726">
    <property type="entry name" value="PNPase"/>
    <property type="match status" value="1"/>
</dbReference>
<dbReference type="Pfam" id="PF01138">
    <property type="entry name" value="RNase_PH"/>
    <property type="match status" value="2"/>
</dbReference>
<dbReference type="Pfam" id="PF00575">
    <property type="entry name" value="S1"/>
    <property type="match status" value="1"/>
</dbReference>
<dbReference type="PIRSF" id="PIRSF005499">
    <property type="entry name" value="PNPase"/>
    <property type="match status" value="1"/>
</dbReference>
<dbReference type="SMART" id="SM00322">
    <property type="entry name" value="KH"/>
    <property type="match status" value="1"/>
</dbReference>
<dbReference type="SMART" id="SM00316">
    <property type="entry name" value="S1"/>
    <property type="match status" value="1"/>
</dbReference>
<dbReference type="SUPFAM" id="SSF54791">
    <property type="entry name" value="Eukaryotic type KH-domain (KH-domain type I)"/>
    <property type="match status" value="1"/>
</dbReference>
<dbReference type="SUPFAM" id="SSF46915">
    <property type="entry name" value="Polynucleotide phosphorylase/guanosine pentaphosphate synthase (PNPase/GPSI), domain 3"/>
    <property type="match status" value="1"/>
</dbReference>
<dbReference type="SUPFAM" id="SSF55666">
    <property type="entry name" value="Ribonuclease PH domain 2-like"/>
    <property type="match status" value="2"/>
</dbReference>
<dbReference type="SUPFAM" id="SSF54211">
    <property type="entry name" value="Ribosomal protein S5 domain 2-like"/>
    <property type="match status" value="2"/>
</dbReference>
<dbReference type="PROSITE" id="PS50084">
    <property type="entry name" value="KH_TYPE_1"/>
    <property type="match status" value="1"/>
</dbReference>
<dbReference type="PROSITE" id="PS50126">
    <property type="entry name" value="S1"/>
    <property type="match status" value="1"/>
</dbReference>